<evidence type="ECO:0000255" key="1">
    <source>
        <dbReference type="HAMAP-Rule" id="MF_00354"/>
    </source>
</evidence>
<feature type="chain" id="PRO_1000133430" description="Isopentenyl-diphosphate delta-isomerase">
    <location>
        <begin position="1"/>
        <end position="360"/>
    </location>
</feature>
<feature type="binding site" evidence="1">
    <location>
        <begin position="12"/>
        <end position="13"/>
    </location>
    <ligand>
        <name>substrate</name>
    </ligand>
</feature>
<feature type="binding site" evidence="1">
    <location>
        <position position="70"/>
    </location>
    <ligand>
        <name>FMN</name>
        <dbReference type="ChEBI" id="CHEBI:58210"/>
    </ligand>
</feature>
<feature type="binding site" evidence="1">
    <location>
        <begin position="71"/>
        <end position="73"/>
    </location>
    <ligand>
        <name>FMN</name>
        <dbReference type="ChEBI" id="CHEBI:58210"/>
    </ligand>
</feature>
<feature type="binding site" evidence="1">
    <location>
        <begin position="101"/>
        <end position="103"/>
    </location>
    <ligand>
        <name>substrate</name>
    </ligand>
</feature>
<feature type="binding site" evidence="1">
    <location>
        <position position="101"/>
    </location>
    <ligand>
        <name>FMN</name>
        <dbReference type="ChEBI" id="CHEBI:58210"/>
    </ligand>
</feature>
<feature type="binding site" evidence="1">
    <location>
        <position position="130"/>
    </location>
    <ligand>
        <name>FMN</name>
        <dbReference type="ChEBI" id="CHEBI:58210"/>
    </ligand>
</feature>
<feature type="binding site" evidence="1">
    <location>
        <position position="165"/>
    </location>
    <ligand>
        <name>substrate</name>
    </ligand>
</feature>
<feature type="binding site" evidence="1">
    <location>
        <position position="166"/>
    </location>
    <ligand>
        <name>Mg(2+)</name>
        <dbReference type="ChEBI" id="CHEBI:18420"/>
    </ligand>
</feature>
<feature type="binding site" evidence="1">
    <location>
        <position position="197"/>
    </location>
    <ligand>
        <name>FMN</name>
        <dbReference type="ChEBI" id="CHEBI:58210"/>
    </ligand>
</feature>
<feature type="binding site" evidence="1">
    <location>
        <begin position="288"/>
        <end position="290"/>
    </location>
    <ligand>
        <name>FMN</name>
        <dbReference type="ChEBI" id="CHEBI:58210"/>
    </ligand>
</feature>
<feature type="binding site" evidence="1">
    <location>
        <begin position="309"/>
        <end position="310"/>
    </location>
    <ligand>
        <name>FMN</name>
        <dbReference type="ChEBI" id="CHEBI:58210"/>
    </ligand>
</feature>
<protein>
    <recommendedName>
        <fullName evidence="1">Isopentenyl-diphosphate delta-isomerase</fullName>
        <shortName evidence="1">IPP isomerase</shortName>
        <ecNumber evidence="1">5.3.3.2</ecNumber>
    </recommendedName>
    <alternativeName>
        <fullName evidence="1">Isopentenyl diphosphate:dimethylallyl diphosphate isomerase</fullName>
    </alternativeName>
    <alternativeName>
        <fullName evidence="1">Isopentenyl pyrophosphate isomerase</fullName>
    </alternativeName>
    <alternativeName>
        <fullName evidence="1">Type 2 isopentenyl diphosphate isomerase</fullName>
        <shortName evidence="1">IDI-2</shortName>
    </alternativeName>
</protein>
<proteinExistence type="inferred from homology"/>
<reference key="1">
    <citation type="submission" date="2008-05" db="EMBL/GenBank/DDBJ databases">
        <title>Complete sequence of Chlorobium limicola DSM 245.</title>
        <authorList>
            <consortium name="US DOE Joint Genome Institute"/>
            <person name="Lucas S."/>
            <person name="Copeland A."/>
            <person name="Lapidus A."/>
            <person name="Glavina del Rio T."/>
            <person name="Dalin E."/>
            <person name="Tice H."/>
            <person name="Bruce D."/>
            <person name="Goodwin L."/>
            <person name="Pitluck S."/>
            <person name="Schmutz J."/>
            <person name="Larimer F."/>
            <person name="Land M."/>
            <person name="Hauser L."/>
            <person name="Kyrpides N."/>
            <person name="Ovchinnikova G."/>
            <person name="Zhao F."/>
            <person name="Li T."/>
            <person name="Liu Z."/>
            <person name="Overmann J."/>
            <person name="Bryant D.A."/>
            <person name="Richardson P."/>
        </authorList>
    </citation>
    <scope>NUCLEOTIDE SEQUENCE [LARGE SCALE GENOMIC DNA]</scope>
    <source>
        <strain>DSM 245 / NBRC 103803 / 6330</strain>
    </source>
</reference>
<sequence>MSDSLSNITIERKHNHVEICLHEAVGFDRKSAGFDEIEFIHNALPEIRFSDIDLSTTFLGRKIGAPLMISSMTGGFEKASLLNRRFAEAAEHFGIPLGIGSMRQALENSTQKESFAIVRKYAPSVPVFANIGAPEVARGLSASDIGILLELIEADALIVHLNAAQELFQPEGNTDFRHVLDQLSHLCATVPVPVIVKEVGCGISGVCAQRVLDAGVKVIDVAGAGGISWQKVEEIRYVRQRERENRFSPEALDDLLNWGIPTARCIAEVSDLKKHTVHTDFEIIASGGIRSGLDIAKSLALGARIGASAGQLLNAAHEERLEETIETWLNDLRAVLFLTGTTSPDKLQKQHLILKHRPIL</sequence>
<dbReference type="EC" id="5.3.3.2" evidence="1"/>
<dbReference type="EMBL" id="CP001097">
    <property type="protein sequence ID" value="ACD89410.1"/>
    <property type="molecule type" value="Genomic_DNA"/>
</dbReference>
<dbReference type="RefSeq" id="WP_012465291.1">
    <property type="nucleotide sequence ID" value="NC_010803.1"/>
</dbReference>
<dbReference type="SMR" id="B3EFC7"/>
<dbReference type="STRING" id="290315.Clim_0316"/>
<dbReference type="KEGG" id="cli:Clim_0316"/>
<dbReference type="eggNOG" id="COG1304">
    <property type="taxonomic scope" value="Bacteria"/>
</dbReference>
<dbReference type="HOGENOM" id="CLU_065515_1_0_10"/>
<dbReference type="OrthoDB" id="9795032at2"/>
<dbReference type="Proteomes" id="UP000008841">
    <property type="component" value="Chromosome"/>
</dbReference>
<dbReference type="GO" id="GO:0005737">
    <property type="term" value="C:cytoplasm"/>
    <property type="evidence" value="ECO:0007669"/>
    <property type="project" value="UniProtKB-SubCell"/>
</dbReference>
<dbReference type="GO" id="GO:0010181">
    <property type="term" value="F:FMN binding"/>
    <property type="evidence" value="ECO:0007669"/>
    <property type="project" value="UniProtKB-UniRule"/>
</dbReference>
<dbReference type="GO" id="GO:0004452">
    <property type="term" value="F:isopentenyl-diphosphate delta-isomerase activity"/>
    <property type="evidence" value="ECO:0007669"/>
    <property type="project" value="UniProtKB-UniRule"/>
</dbReference>
<dbReference type="GO" id="GO:0000287">
    <property type="term" value="F:magnesium ion binding"/>
    <property type="evidence" value="ECO:0007669"/>
    <property type="project" value="UniProtKB-UniRule"/>
</dbReference>
<dbReference type="GO" id="GO:0070402">
    <property type="term" value="F:NADPH binding"/>
    <property type="evidence" value="ECO:0007669"/>
    <property type="project" value="UniProtKB-UniRule"/>
</dbReference>
<dbReference type="GO" id="GO:0016491">
    <property type="term" value="F:oxidoreductase activity"/>
    <property type="evidence" value="ECO:0007669"/>
    <property type="project" value="InterPro"/>
</dbReference>
<dbReference type="GO" id="GO:0008299">
    <property type="term" value="P:isoprenoid biosynthetic process"/>
    <property type="evidence" value="ECO:0007669"/>
    <property type="project" value="UniProtKB-UniRule"/>
</dbReference>
<dbReference type="CDD" id="cd02811">
    <property type="entry name" value="IDI-2_FMN"/>
    <property type="match status" value="1"/>
</dbReference>
<dbReference type="Gene3D" id="3.20.20.70">
    <property type="entry name" value="Aldolase class I"/>
    <property type="match status" value="1"/>
</dbReference>
<dbReference type="HAMAP" id="MF_00354">
    <property type="entry name" value="Idi_2"/>
    <property type="match status" value="1"/>
</dbReference>
<dbReference type="InterPro" id="IPR013785">
    <property type="entry name" value="Aldolase_TIM"/>
</dbReference>
<dbReference type="InterPro" id="IPR000262">
    <property type="entry name" value="FMN-dep_DH"/>
</dbReference>
<dbReference type="InterPro" id="IPR011179">
    <property type="entry name" value="IPdP_isomerase"/>
</dbReference>
<dbReference type="NCBIfam" id="TIGR02151">
    <property type="entry name" value="IPP_isom_2"/>
    <property type="match status" value="1"/>
</dbReference>
<dbReference type="PANTHER" id="PTHR43665">
    <property type="entry name" value="ISOPENTENYL-DIPHOSPHATE DELTA-ISOMERASE"/>
    <property type="match status" value="1"/>
</dbReference>
<dbReference type="PANTHER" id="PTHR43665:SF1">
    <property type="entry name" value="ISOPENTENYL-DIPHOSPHATE DELTA-ISOMERASE"/>
    <property type="match status" value="1"/>
</dbReference>
<dbReference type="Pfam" id="PF01070">
    <property type="entry name" value="FMN_dh"/>
    <property type="match status" value="2"/>
</dbReference>
<dbReference type="PIRSF" id="PIRSF003314">
    <property type="entry name" value="IPP_isomerase"/>
    <property type="match status" value="1"/>
</dbReference>
<dbReference type="SMART" id="SM01240">
    <property type="entry name" value="IMPDH"/>
    <property type="match status" value="1"/>
</dbReference>
<dbReference type="SUPFAM" id="SSF51395">
    <property type="entry name" value="FMN-linked oxidoreductases"/>
    <property type="match status" value="1"/>
</dbReference>
<comment type="function">
    <text evidence="1">Involved in the biosynthesis of isoprenoids. Catalyzes the 1,3-allylic rearrangement of the homoallylic substrate isopentenyl (IPP) to its allylic isomer, dimethylallyl diphosphate (DMAPP).</text>
</comment>
<comment type="catalytic activity">
    <reaction evidence="1">
        <text>isopentenyl diphosphate = dimethylallyl diphosphate</text>
        <dbReference type="Rhea" id="RHEA:23284"/>
        <dbReference type="ChEBI" id="CHEBI:57623"/>
        <dbReference type="ChEBI" id="CHEBI:128769"/>
        <dbReference type="EC" id="5.3.3.2"/>
    </reaction>
</comment>
<comment type="cofactor">
    <cofactor evidence="1">
        <name>FMN</name>
        <dbReference type="ChEBI" id="CHEBI:58210"/>
    </cofactor>
</comment>
<comment type="cofactor">
    <cofactor evidence="1">
        <name>NADPH</name>
        <dbReference type="ChEBI" id="CHEBI:57783"/>
    </cofactor>
</comment>
<comment type="cofactor">
    <cofactor evidence="1">
        <name>Mg(2+)</name>
        <dbReference type="ChEBI" id="CHEBI:18420"/>
    </cofactor>
</comment>
<comment type="subunit">
    <text evidence="1">Homooctamer. Dimer of tetramers.</text>
</comment>
<comment type="subcellular location">
    <subcellularLocation>
        <location evidence="1">Cytoplasm</location>
    </subcellularLocation>
</comment>
<comment type="similarity">
    <text evidence="1">Belongs to the IPP isomerase type 2 family.</text>
</comment>
<name>IDI2_CHLL2</name>
<keyword id="KW-0963">Cytoplasm</keyword>
<keyword id="KW-0285">Flavoprotein</keyword>
<keyword id="KW-0288">FMN</keyword>
<keyword id="KW-0413">Isomerase</keyword>
<keyword id="KW-0414">Isoprene biosynthesis</keyword>
<keyword id="KW-0460">Magnesium</keyword>
<keyword id="KW-0479">Metal-binding</keyword>
<keyword id="KW-0521">NADP</keyword>
<accession>B3EFC7</accession>
<organism>
    <name type="scientific">Chlorobium limicola (strain DSM 245 / NBRC 103803 / 6330)</name>
    <dbReference type="NCBI Taxonomy" id="290315"/>
    <lineage>
        <taxon>Bacteria</taxon>
        <taxon>Pseudomonadati</taxon>
        <taxon>Chlorobiota</taxon>
        <taxon>Chlorobiia</taxon>
        <taxon>Chlorobiales</taxon>
        <taxon>Chlorobiaceae</taxon>
        <taxon>Chlorobium/Pelodictyon group</taxon>
        <taxon>Chlorobium</taxon>
    </lineage>
</organism>
<gene>
    <name evidence="1" type="primary">fni</name>
    <name type="ordered locus">Clim_0316</name>
</gene>